<keyword id="KW-0002">3D-structure</keyword>
<keyword id="KW-0903">Direct protein sequencing</keyword>
<keyword id="KW-0496">Mitochondrion</keyword>
<keyword id="KW-1185">Reference proteome</keyword>
<keyword id="KW-0687">Ribonucleoprotein</keyword>
<keyword id="KW-0689">Ribosomal protein</keyword>
<dbReference type="EMBL" id="BC102289">
    <property type="protein sequence ID" value="AAI02290.1"/>
    <property type="molecule type" value="mRNA"/>
</dbReference>
<dbReference type="RefSeq" id="NP_001030577.1">
    <property type="nucleotide sequence ID" value="NM_001035500.2"/>
</dbReference>
<dbReference type="PDB" id="3JD5">
    <property type="method" value="EM"/>
    <property type="resolution" value="7.00 A"/>
    <property type="chains" value="j=1-218"/>
</dbReference>
<dbReference type="PDB" id="6NEQ">
    <property type="method" value="EM"/>
    <property type="resolution" value="3.32 A"/>
    <property type="chains" value="j=1-218"/>
</dbReference>
<dbReference type="PDB" id="6NF8">
    <property type="method" value="EM"/>
    <property type="resolution" value="3.48 A"/>
    <property type="chains" value="j=1-218"/>
</dbReference>
<dbReference type="PDBsum" id="3JD5"/>
<dbReference type="PDBsum" id="6NEQ"/>
<dbReference type="PDBsum" id="6NF8"/>
<dbReference type="EMDB" id="EMD-9358"/>
<dbReference type="EMDB" id="EMD-9362"/>
<dbReference type="SMR" id="P82929"/>
<dbReference type="CORUM" id="P82929"/>
<dbReference type="FunCoup" id="P82929">
    <property type="interactions" value="615"/>
</dbReference>
<dbReference type="IntAct" id="P82929">
    <property type="interactions" value="2"/>
</dbReference>
<dbReference type="STRING" id="9913.ENSBTAP00000037370"/>
<dbReference type="PaxDb" id="9913-ENSBTAP00000037370"/>
<dbReference type="GeneID" id="618357"/>
<dbReference type="KEGG" id="bta:618357"/>
<dbReference type="CTD" id="65993"/>
<dbReference type="eggNOG" id="ENOG502QSI0">
    <property type="taxonomic scope" value="Eukaryota"/>
</dbReference>
<dbReference type="InParanoid" id="P82929"/>
<dbReference type="OrthoDB" id="16434at2759"/>
<dbReference type="Proteomes" id="UP000009136">
    <property type="component" value="Unplaced"/>
</dbReference>
<dbReference type="GO" id="GO:0005743">
    <property type="term" value="C:mitochondrial inner membrane"/>
    <property type="evidence" value="ECO:0000304"/>
    <property type="project" value="Reactome"/>
</dbReference>
<dbReference type="GO" id="GO:0005763">
    <property type="term" value="C:mitochondrial small ribosomal subunit"/>
    <property type="evidence" value="ECO:0000314"/>
    <property type="project" value="UniProtKB"/>
</dbReference>
<dbReference type="GO" id="GO:0003735">
    <property type="term" value="F:structural constituent of ribosome"/>
    <property type="evidence" value="ECO:0007005"/>
    <property type="project" value="UniProtKB"/>
</dbReference>
<dbReference type="GO" id="GO:0032543">
    <property type="term" value="P:mitochondrial translation"/>
    <property type="evidence" value="ECO:0007005"/>
    <property type="project" value="UniProtKB"/>
</dbReference>
<dbReference type="InterPro" id="IPR032053">
    <property type="entry name" value="Ribosomal_mS34"/>
</dbReference>
<dbReference type="PANTHER" id="PTHR28589">
    <property type="entry name" value="28S RIBOSOMAL PROTEIN S34, MITOCHONDRIAL"/>
    <property type="match status" value="1"/>
</dbReference>
<dbReference type="PANTHER" id="PTHR28589:SF1">
    <property type="entry name" value="SMALL RIBOSOMAL SUBUNIT PROTEIN MS34"/>
    <property type="match status" value="1"/>
</dbReference>
<dbReference type="Pfam" id="PF16053">
    <property type="entry name" value="MRP-S34"/>
    <property type="match status" value="1"/>
</dbReference>
<gene>
    <name evidence="1" type="primary">MRPS34</name>
</gene>
<comment type="function">
    <text evidence="2">Required for mitochondrial translation, plays a role in maintaining the stability of the small ribosomal subunit and the 12S rRNA that are required for mitoribosome formation.</text>
</comment>
<comment type="subunit">
    <text evidence="5">Component of the mitochondrial ribosome small subunit (28S) which comprises a 12S rRNA and about 30 distinct proteins.</text>
</comment>
<comment type="subcellular location">
    <subcellularLocation>
        <location evidence="4 5">Mitochondrion</location>
    </subcellularLocation>
</comment>
<comment type="similarity">
    <text evidence="5">Belongs to the mitochondrion-specific ribosomal protein mS34 family.</text>
</comment>
<proteinExistence type="evidence at protein level"/>
<sequence length="218" mass="25832">MARRKVRPRLIAELARRVRALREQRERPRDSVRYALDYETLIRPHSGRKLPLRAWVDVRRESRLLQLLGRLPFFGLGRLVTRKSWLWQHDEPCYWRLTRVRPDYTAQNLDHGKAWGILTFKGKTESEAREIEQVMHHDWRLVPKHEEAAFTSFTPAPEETPRPVPYPPLLRAMILAERQKNGDPSTEEPMLSLERIRTDPWDYPENQEAKKKTKGTAV</sequence>
<accession>P82929</accession>
<accession>Q3T0R5</accession>
<feature type="initiator methionine" description="Removed" evidence="4">
    <location>
        <position position="1"/>
    </location>
</feature>
<feature type="chain" id="PRO_0000087729" description="Small ribosomal subunit protein mS34">
    <location>
        <begin position="2"/>
        <end position="218"/>
    </location>
</feature>
<feature type="region of interest" description="Disordered" evidence="3">
    <location>
        <begin position="178"/>
        <end position="218"/>
    </location>
</feature>
<feature type="helix" evidence="7">
    <location>
        <begin position="10"/>
        <end position="26"/>
    </location>
</feature>
<feature type="helix" evidence="7">
    <location>
        <begin position="30"/>
        <end position="33"/>
    </location>
</feature>
<feature type="turn" evidence="7">
    <location>
        <begin position="38"/>
        <end position="40"/>
    </location>
</feature>
<feature type="turn" evidence="7">
    <location>
        <begin position="44"/>
        <end position="47"/>
    </location>
</feature>
<feature type="helix" evidence="7">
    <location>
        <begin position="52"/>
        <end position="54"/>
    </location>
</feature>
<feature type="helix" evidence="7">
    <location>
        <begin position="55"/>
        <end position="60"/>
    </location>
</feature>
<feature type="helix" evidence="7">
    <location>
        <begin position="64"/>
        <end position="68"/>
    </location>
</feature>
<feature type="strand" evidence="8">
    <location>
        <begin position="74"/>
        <end position="76"/>
    </location>
</feature>
<feature type="strand" evidence="7">
    <location>
        <begin position="79"/>
        <end position="82"/>
    </location>
</feature>
<feature type="helix" evidence="7">
    <location>
        <begin position="83"/>
        <end position="88"/>
    </location>
</feature>
<feature type="strand" evidence="7">
    <location>
        <begin position="94"/>
        <end position="102"/>
    </location>
</feature>
<feature type="strand" evidence="8">
    <location>
        <begin position="107"/>
        <end position="109"/>
    </location>
</feature>
<feature type="strand" evidence="7">
    <location>
        <begin position="112"/>
        <end position="120"/>
    </location>
</feature>
<feature type="strand" evidence="7">
    <location>
        <begin position="123"/>
        <end position="130"/>
    </location>
</feature>
<feature type="strand" evidence="8">
    <location>
        <begin position="132"/>
        <end position="135"/>
    </location>
</feature>
<feature type="strand" evidence="7">
    <location>
        <begin position="139"/>
        <end position="141"/>
    </location>
</feature>
<feature type="strand" evidence="7">
    <location>
        <begin position="144"/>
        <end position="146"/>
    </location>
</feature>
<feature type="strand" evidence="7">
    <location>
        <begin position="148"/>
        <end position="152"/>
    </location>
</feature>
<feature type="helix" evidence="7">
    <location>
        <begin position="168"/>
        <end position="181"/>
    </location>
</feature>
<feature type="strand" evidence="7">
    <location>
        <begin position="207"/>
        <end position="209"/>
    </location>
</feature>
<protein>
    <recommendedName>
        <fullName evidence="5">Small ribosomal subunit protein mS34</fullName>
    </recommendedName>
    <alternativeName>
        <fullName>28S ribosomal protein S34, mitochondrial</fullName>
        <shortName>MRP-S34</shortName>
        <shortName>S34mt</shortName>
    </alternativeName>
</protein>
<evidence type="ECO:0000250" key="1">
    <source>
        <dbReference type="UniProtKB" id="P82930"/>
    </source>
</evidence>
<evidence type="ECO:0000250" key="2">
    <source>
        <dbReference type="UniProtKB" id="Q9JIK9"/>
    </source>
</evidence>
<evidence type="ECO:0000256" key="3">
    <source>
        <dbReference type="SAM" id="MobiDB-lite"/>
    </source>
</evidence>
<evidence type="ECO:0000269" key="4">
    <source>
    </source>
</evidence>
<evidence type="ECO:0000305" key="5"/>
<evidence type="ECO:0000312" key="6">
    <source>
        <dbReference type="EMBL" id="AAI02290.1"/>
    </source>
</evidence>
<evidence type="ECO:0007829" key="7">
    <source>
        <dbReference type="PDB" id="6NEQ"/>
    </source>
</evidence>
<evidence type="ECO:0007829" key="8">
    <source>
        <dbReference type="PDB" id="6NF8"/>
    </source>
</evidence>
<organism>
    <name type="scientific">Bos taurus</name>
    <name type="common">Bovine</name>
    <dbReference type="NCBI Taxonomy" id="9913"/>
    <lineage>
        <taxon>Eukaryota</taxon>
        <taxon>Metazoa</taxon>
        <taxon>Chordata</taxon>
        <taxon>Craniata</taxon>
        <taxon>Vertebrata</taxon>
        <taxon>Euteleostomi</taxon>
        <taxon>Mammalia</taxon>
        <taxon>Eutheria</taxon>
        <taxon>Laurasiatheria</taxon>
        <taxon>Artiodactyla</taxon>
        <taxon>Ruminantia</taxon>
        <taxon>Pecora</taxon>
        <taxon>Bovidae</taxon>
        <taxon>Bovinae</taxon>
        <taxon>Bos</taxon>
    </lineage>
</organism>
<name>RT34_BOVIN</name>
<reference evidence="6" key="1">
    <citation type="submission" date="2005-08" db="EMBL/GenBank/DDBJ databases">
        <authorList>
            <consortium name="NIH - Mammalian Gene Collection (MGC) project"/>
        </authorList>
    </citation>
    <scope>NUCLEOTIDE SEQUENCE [LARGE SCALE MRNA]</scope>
    <source>
        <strain evidence="6">Crossbred X Angus</strain>
        <tissue evidence="6">Ileum</tissue>
    </source>
</reference>
<reference key="2">
    <citation type="journal article" date="2000" name="J. Biol. Chem.">
        <title>Mammalian mitochondrial ribosomal proteins (4). Amino acid sequencing, characterization, and identification of corresponding gene sequences.</title>
        <authorList>
            <person name="O'Brien T.W."/>
            <person name="Liu J."/>
            <person name="Sylvester J.E."/>
            <person name="Mougey E.B."/>
            <person name="Fischel-Ghodsian N."/>
            <person name="Thiede B."/>
            <person name="Wittmann-Liebold B."/>
            <person name="Graack H.R."/>
        </authorList>
    </citation>
    <scope>PROTEIN SEQUENCE OF 2-10</scope>
    <scope>SUBCELLULAR LOCATION</scope>
</reference>
<reference evidence="5" key="3">
    <citation type="journal article" date="2001" name="J. Biol. Chem.">
        <title>The small subunit of the mammalian mitochondrial ribosome: identification of the full complement of ribosomal proteins present.</title>
        <authorList>
            <person name="Koc E.C."/>
            <person name="Burkhart W."/>
            <person name="Blackburn K."/>
            <person name="Moseley A."/>
            <person name="Spremulli L.L."/>
        </authorList>
    </citation>
    <scope>PROTEIN SEQUENCE OF 114-121</scope>
    <source>
        <tissue>Liver</tissue>
    </source>
</reference>